<organism>
    <name type="scientific">Rattus norvegicus</name>
    <name type="common">Rat</name>
    <dbReference type="NCBI Taxonomy" id="10116"/>
    <lineage>
        <taxon>Eukaryota</taxon>
        <taxon>Metazoa</taxon>
        <taxon>Chordata</taxon>
        <taxon>Craniata</taxon>
        <taxon>Vertebrata</taxon>
        <taxon>Euteleostomi</taxon>
        <taxon>Mammalia</taxon>
        <taxon>Eutheria</taxon>
        <taxon>Euarchontoglires</taxon>
        <taxon>Glires</taxon>
        <taxon>Rodentia</taxon>
        <taxon>Myomorpha</taxon>
        <taxon>Muroidea</taxon>
        <taxon>Muridae</taxon>
        <taxon>Murinae</taxon>
        <taxon>Rattus</taxon>
    </lineage>
</organism>
<protein>
    <recommendedName>
        <fullName>Proteasome subunit alpha type-7</fullName>
    </recommendedName>
    <alternativeName>
        <fullName>Proteasome subunit RC6-1</fullName>
    </alternativeName>
    <alternativeName>
        <fullName>Proteasome subunit alpha-4</fullName>
        <shortName>alpha-4</shortName>
    </alternativeName>
</protein>
<name>PSA7_RAT</name>
<reference key="1">
    <citation type="journal article" date="1995" name="Biochim. Biophys. Acta">
        <title>Molecular cloning of two types of cDNA encoding subunit RC6-I of rat proteasomes.</title>
        <authorList>
            <person name="Ni R."/>
            <person name="Tomita Y."/>
            <person name="Tokunaga F."/>
            <person name="Liang T.J."/>
            <person name="Noda C."/>
            <person name="Ichihara A."/>
            <person name="Tanaka K."/>
        </authorList>
    </citation>
    <scope>NUCLEOTIDE SEQUENCE [MRNA] (ISOFORMS RC6-IL AND RC6-IS)</scope>
    <scope>PARTIAL PROTEIN SEQUENCE</scope>
    <source>
        <strain>Wistar</strain>
        <tissue>Liver</tissue>
    </source>
</reference>
<keyword id="KW-0002">3D-structure</keyword>
<keyword id="KW-0007">Acetylation</keyword>
<keyword id="KW-0025">Alternative splicing</keyword>
<keyword id="KW-0963">Cytoplasm</keyword>
<keyword id="KW-0903">Direct protein sequencing</keyword>
<keyword id="KW-0325">Glycoprotein</keyword>
<keyword id="KW-0539">Nucleus</keyword>
<keyword id="KW-0597">Phosphoprotein</keyword>
<keyword id="KW-0647">Proteasome</keyword>
<keyword id="KW-1185">Reference proteome</keyword>
<dbReference type="EMBL" id="D30804">
    <property type="protein sequence ID" value="BAA06463.1"/>
    <property type="molecule type" value="mRNA"/>
</dbReference>
<dbReference type="PIR" id="S60038">
    <property type="entry name" value="S60038"/>
</dbReference>
<dbReference type="PDB" id="6EPC">
    <property type="method" value="EM"/>
    <property type="resolution" value="12.30 A"/>
    <property type="chains" value="D=1-254"/>
</dbReference>
<dbReference type="PDB" id="6EPD">
    <property type="method" value="EM"/>
    <property type="resolution" value="15.40 A"/>
    <property type="chains" value="D=1-254"/>
</dbReference>
<dbReference type="PDB" id="6EPE">
    <property type="method" value="EM"/>
    <property type="resolution" value="12.80 A"/>
    <property type="chains" value="D=1-254"/>
</dbReference>
<dbReference type="PDB" id="6EPF">
    <property type="method" value="EM"/>
    <property type="resolution" value="11.80 A"/>
    <property type="chains" value="D=1-254"/>
</dbReference>
<dbReference type="PDB" id="6TU3">
    <property type="method" value="EM"/>
    <property type="resolution" value="2.70 A"/>
    <property type="chains" value="D/R=1-254"/>
</dbReference>
<dbReference type="PDBsum" id="6EPC"/>
<dbReference type="PDBsum" id="6EPD"/>
<dbReference type="PDBsum" id="6EPE"/>
<dbReference type="PDBsum" id="6EPF"/>
<dbReference type="PDBsum" id="6TU3"/>
<dbReference type="EMDB" id="EMD-10586"/>
<dbReference type="EMDB" id="EMD-3913"/>
<dbReference type="EMDB" id="EMD-3914"/>
<dbReference type="EMDB" id="EMD-3915"/>
<dbReference type="EMDB" id="EMD-3916"/>
<dbReference type="SMR" id="P48004"/>
<dbReference type="ComplexPortal" id="CPX-8965">
    <property type="entry name" value="30S proteasome complex"/>
</dbReference>
<dbReference type="FunCoup" id="P48004">
    <property type="interactions" value="2049"/>
</dbReference>
<dbReference type="IntAct" id="P48004">
    <property type="interactions" value="3"/>
</dbReference>
<dbReference type="STRING" id="10116.ENSRNOP00000071611"/>
<dbReference type="GlyCosmos" id="P48004">
    <property type="glycosylation" value="1 site, No reported glycans"/>
</dbReference>
<dbReference type="GlyGen" id="P48004">
    <property type="glycosylation" value="1 site"/>
</dbReference>
<dbReference type="PhosphoSitePlus" id="P48004"/>
<dbReference type="jPOST" id="P48004"/>
<dbReference type="PaxDb" id="10116-ENSRNOP00000011724"/>
<dbReference type="PeptideAtlas" id="P48004"/>
<dbReference type="AGR" id="RGD:61851"/>
<dbReference type="RGD" id="61851">
    <property type="gene designation" value="Psma7"/>
</dbReference>
<dbReference type="eggNOG" id="KOG0183">
    <property type="taxonomic scope" value="Eukaryota"/>
</dbReference>
<dbReference type="InParanoid" id="P48004"/>
<dbReference type="PhylomeDB" id="P48004"/>
<dbReference type="Reactome" id="R-RNO-1169091">
    <property type="pathway name" value="Activation of NF-kappaB in B cells"/>
</dbReference>
<dbReference type="Reactome" id="R-RNO-1234176">
    <property type="pathway name" value="Oxygen-dependent proline hydroxylation of Hypoxia-inducible Factor Alpha"/>
</dbReference>
<dbReference type="Reactome" id="R-RNO-1236978">
    <property type="pathway name" value="Cross-presentation of soluble exogenous antigens (endosomes)"/>
</dbReference>
<dbReference type="Reactome" id="R-RNO-174084">
    <property type="pathway name" value="Autodegradation of Cdh1 by Cdh1:APC/C"/>
</dbReference>
<dbReference type="Reactome" id="R-RNO-174113">
    <property type="pathway name" value="SCF-beta-TrCP mediated degradation of Emi1"/>
</dbReference>
<dbReference type="Reactome" id="R-RNO-174154">
    <property type="pathway name" value="APC/C:Cdc20 mediated degradation of Securin"/>
</dbReference>
<dbReference type="Reactome" id="R-RNO-174178">
    <property type="pathway name" value="APC/C:Cdh1 mediated degradation of Cdc20 and other APC/C:Cdh1 targeted proteins in late mitosis/early G1"/>
</dbReference>
<dbReference type="Reactome" id="R-RNO-174184">
    <property type="pathway name" value="Cdc20:Phospho-APC/C mediated degradation of Cyclin A"/>
</dbReference>
<dbReference type="Reactome" id="R-RNO-187577">
    <property type="pathway name" value="SCF(Skp2)-mediated degradation of p27/p21"/>
</dbReference>
<dbReference type="Reactome" id="R-RNO-195253">
    <property type="pathway name" value="Degradation of beta-catenin by the destruction complex"/>
</dbReference>
<dbReference type="Reactome" id="R-RNO-2467813">
    <property type="pathway name" value="Separation of Sister Chromatids"/>
</dbReference>
<dbReference type="Reactome" id="R-RNO-349425">
    <property type="pathway name" value="Autodegradation of the E3 ubiquitin ligase COP1"/>
</dbReference>
<dbReference type="Reactome" id="R-RNO-350562">
    <property type="pathway name" value="Regulation of ornithine decarboxylase (ODC)"/>
</dbReference>
<dbReference type="Reactome" id="R-RNO-382556">
    <property type="pathway name" value="ABC-family proteins mediated transport"/>
</dbReference>
<dbReference type="Reactome" id="R-RNO-450408">
    <property type="pathway name" value="AUF1 (hnRNP D0) binds and destabilizes mRNA"/>
</dbReference>
<dbReference type="Reactome" id="R-RNO-4608870">
    <property type="pathway name" value="Asymmetric localization of PCP proteins"/>
</dbReference>
<dbReference type="Reactome" id="R-RNO-4641257">
    <property type="pathway name" value="Degradation of AXIN"/>
</dbReference>
<dbReference type="Reactome" id="R-RNO-4641258">
    <property type="pathway name" value="Degradation of DVL"/>
</dbReference>
<dbReference type="Reactome" id="R-RNO-5358346">
    <property type="pathway name" value="Hedgehog ligand biogenesis"/>
</dbReference>
<dbReference type="Reactome" id="R-RNO-5607761">
    <property type="pathway name" value="Dectin-1 mediated noncanonical NF-kB signaling"/>
</dbReference>
<dbReference type="Reactome" id="R-RNO-5610780">
    <property type="pathway name" value="Degradation of GLI1 by the proteasome"/>
</dbReference>
<dbReference type="Reactome" id="R-RNO-5610785">
    <property type="pathway name" value="GLI3 is processed to GLI3R by the proteasome"/>
</dbReference>
<dbReference type="Reactome" id="R-RNO-5632684">
    <property type="pathway name" value="Hedgehog 'on' state"/>
</dbReference>
<dbReference type="Reactome" id="R-RNO-5658442">
    <property type="pathway name" value="Regulation of RAS by GAPs"/>
</dbReference>
<dbReference type="Reactome" id="R-RNO-5668541">
    <property type="pathway name" value="TNFR2 non-canonical NF-kB pathway"/>
</dbReference>
<dbReference type="Reactome" id="R-RNO-5676590">
    <property type="pathway name" value="NIK--&gt;noncanonical NF-kB signaling"/>
</dbReference>
<dbReference type="Reactome" id="R-RNO-5687128">
    <property type="pathway name" value="MAPK6/MAPK4 signaling"/>
</dbReference>
<dbReference type="Reactome" id="R-RNO-5689603">
    <property type="pathway name" value="UCH proteinases"/>
</dbReference>
<dbReference type="Reactome" id="R-RNO-5689880">
    <property type="pathway name" value="Ub-specific processing proteases"/>
</dbReference>
<dbReference type="Reactome" id="R-RNO-68867">
    <property type="pathway name" value="Assembly of the pre-replicative complex"/>
</dbReference>
<dbReference type="Reactome" id="R-RNO-68949">
    <property type="pathway name" value="Orc1 removal from chromatin"/>
</dbReference>
<dbReference type="Reactome" id="R-RNO-69017">
    <property type="pathway name" value="CDK-mediated phosphorylation and removal of Cdc6"/>
</dbReference>
<dbReference type="Reactome" id="R-RNO-69481">
    <property type="pathway name" value="G2/M Checkpoints"/>
</dbReference>
<dbReference type="Reactome" id="R-RNO-69601">
    <property type="pathway name" value="Ubiquitin Mediated Degradation of Phosphorylated Cdc25A"/>
</dbReference>
<dbReference type="Reactome" id="R-RNO-75815">
    <property type="pathway name" value="Ubiquitin-dependent degradation of Cyclin D"/>
</dbReference>
<dbReference type="Reactome" id="R-RNO-8852276">
    <property type="pathway name" value="The role of GTSE1 in G2/M progression after G2 checkpoint"/>
</dbReference>
<dbReference type="Reactome" id="R-RNO-8854050">
    <property type="pathway name" value="FBXL7 down-regulates AURKA during mitotic entry and in early mitosis"/>
</dbReference>
<dbReference type="Reactome" id="R-RNO-8939236">
    <property type="pathway name" value="RUNX1 regulates transcription of genes involved in differentiation of HSCs"/>
</dbReference>
<dbReference type="Reactome" id="R-RNO-8941858">
    <property type="pathway name" value="Regulation of RUNX3 expression and activity"/>
</dbReference>
<dbReference type="Reactome" id="R-RNO-8948751">
    <property type="pathway name" value="Regulation of PTEN stability and activity"/>
</dbReference>
<dbReference type="Reactome" id="R-RNO-8951664">
    <property type="pathway name" value="Neddylation"/>
</dbReference>
<dbReference type="Reactome" id="R-RNO-9755511">
    <property type="pathway name" value="KEAP1-NFE2L2 pathway"/>
</dbReference>
<dbReference type="Reactome" id="R-RNO-9762114">
    <property type="pathway name" value="GSK3B and BTRC:CUL1-mediated-degradation of NFE2L2"/>
</dbReference>
<dbReference type="Reactome" id="R-RNO-983168">
    <property type="pathway name" value="Antigen processing: Ubiquitination &amp; Proteasome degradation"/>
</dbReference>
<dbReference type="Reactome" id="R-RNO-9907900">
    <property type="pathway name" value="Proteasome assembly"/>
</dbReference>
<dbReference type="PRO" id="PR:P48004"/>
<dbReference type="Proteomes" id="UP000002494">
    <property type="component" value="Unplaced"/>
</dbReference>
<dbReference type="GO" id="GO:0005737">
    <property type="term" value="C:cytoplasm"/>
    <property type="evidence" value="ECO:0000266"/>
    <property type="project" value="RGD"/>
</dbReference>
<dbReference type="GO" id="GO:0005634">
    <property type="term" value="C:nucleus"/>
    <property type="evidence" value="ECO:0000266"/>
    <property type="project" value="RGD"/>
</dbReference>
<dbReference type="GO" id="GO:0000502">
    <property type="term" value="C:proteasome complex"/>
    <property type="evidence" value="ECO:0000266"/>
    <property type="project" value="RGD"/>
</dbReference>
<dbReference type="GO" id="GO:0005839">
    <property type="term" value="C:proteasome core complex"/>
    <property type="evidence" value="ECO:0000250"/>
    <property type="project" value="UniProtKB"/>
</dbReference>
<dbReference type="GO" id="GO:0019773">
    <property type="term" value="C:proteasome core complex, alpha-subunit complex"/>
    <property type="evidence" value="ECO:0000250"/>
    <property type="project" value="UniProtKB"/>
</dbReference>
<dbReference type="GO" id="GO:0042802">
    <property type="term" value="F:identical protein binding"/>
    <property type="evidence" value="ECO:0000266"/>
    <property type="project" value="RGD"/>
</dbReference>
<dbReference type="GO" id="GO:0043161">
    <property type="term" value="P:proteasome-mediated ubiquitin-dependent protein catabolic process"/>
    <property type="evidence" value="ECO:0000318"/>
    <property type="project" value="GO_Central"/>
</dbReference>
<dbReference type="CDD" id="cd03755">
    <property type="entry name" value="proteasome_alpha_type_7"/>
    <property type="match status" value="1"/>
</dbReference>
<dbReference type="FunFam" id="3.60.20.10:FF:000018">
    <property type="entry name" value="Proteasome subunit alpha type"/>
    <property type="match status" value="1"/>
</dbReference>
<dbReference type="Gene3D" id="3.60.20.10">
    <property type="entry name" value="Glutamine Phosphoribosylpyrophosphate, subunit 1, domain 1"/>
    <property type="match status" value="1"/>
</dbReference>
<dbReference type="InterPro" id="IPR029055">
    <property type="entry name" value="Ntn_hydrolases_N"/>
</dbReference>
<dbReference type="InterPro" id="IPR050115">
    <property type="entry name" value="Proteasome_alpha"/>
</dbReference>
<dbReference type="InterPro" id="IPR023332">
    <property type="entry name" value="Proteasome_alpha-type"/>
</dbReference>
<dbReference type="InterPro" id="IPR000426">
    <property type="entry name" value="Proteasome_asu_N"/>
</dbReference>
<dbReference type="InterPro" id="IPR001353">
    <property type="entry name" value="Proteasome_sua/b"/>
</dbReference>
<dbReference type="NCBIfam" id="NF003075">
    <property type="entry name" value="PRK03996.1"/>
    <property type="match status" value="1"/>
</dbReference>
<dbReference type="PANTHER" id="PTHR11599">
    <property type="entry name" value="PROTEASOME SUBUNIT ALPHA/BETA"/>
    <property type="match status" value="1"/>
</dbReference>
<dbReference type="Pfam" id="PF00227">
    <property type="entry name" value="Proteasome"/>
    <property type="match status" value="1"/>
</dbReference>
<dbReference type="Pfam" id="PF10584">
    <property type="entry name" value="Proteasome_A_N"/>
    <property type="match status" value="1"/>
</dbReference>
<dbReference type="SMART" id="SM00948">
    <property type="entry name" value="Proteasome_A_N"/>
    <property type="match status" value="1"/>
</dbReference>
<dbReference type="SUPFAM" id="SSF56235">
    <property type="entry name" value="N-terminal nucleophile aminohydrolases (Ntn hydrolases)"/>
    <property type="match status" value="1"/>
</dbReference>
<dbReference type="PROSITE" id="PS00388">
    <property type="entry name" value="PROTEASOME_ALPHA_1"/>
    <property type="match status" value="1"/>
</dbReference>
<dbReference type="PROSITE" id="PS51475">
    <property type="entry name" value="PROTEASOME_ALPHA_2"/>
    <property type="match status" value="1"/>
</dbReference>
<evidence type="ECO:0000250" key="1"/>
<evidence type="ECO:0000250" key="2">
    <source>
        <dbReference type="UniProtKB" id="O14818"/>
    </source>
</evidence>
<evidence type="ECO:0000255" key="3">
    <source>
        <dbReference type="PROSITE-ProRule" id="PRU00808"/>
    </source>
</evidence>
<evidence type="ECO:0000303" key="4">
    <source>
    </source>
</evidence>
<evidence type="ECO:0000305" key="5"/>
<evidence type="ECO:0007829" key="6">
    <source>
        <dbReference type="PDB" id="6TU3"/>
    </source>
</evidence>
<accession>P48004</accession>
<gene>
    <name type="primary">Psma7</name>
</gene>
<sequence length="254" mass="28326">MSYDRAITVFSPDGHLFQVEYAQEAVKKGSTAVGVRGRDIVVLGVEKKSVAKLQDERTVRKICALDDNVCMAFAVVASVSGLTADARIVINRARVECQSHRLTVGDPVTVEYITRYIASLKQRYTQSNGRRPFGISALIVGFDFDGTPRLYQTDPSGTYHAWKANAIGRGAKSVREFLEKNYTDDAIETDDLTIKLVIKALLEVVQSGGKNIELAVMRRDQPLKILSPEEIEKYVAEIEKEKEENEKKKQKKAS</sequence>
<comment type="function">
    <text evidence="2">Component of the 20S core proteasome complex involved in the proteolytic degradation of most intracellular proteins. This complex plays numerous essential roles within the cell by associating with different regulatory particles. Associated with two 19S regulatory particles, forms the 26S proteasome and thus participates in the ATP-dependent degradation of ubiquitinated proteins. The 26S proteasome plays a key role in the maintenance of protein homeostasis by removing misfolded or damaged proteins that could impair cellular functions, and by removing proteins whose functions are no longer required. Associated with the PA200 or PA28, the 20S proteasome mediates ubiquitin-independent protein degradation. This type of proteolysis is required in several pathways including spermatogenesis (20S-PA200 complex) or generation of a subset of MHC class I-presented antigenic peptides (20S-PA28 complex). Inhibits the transactivation function of HIF-1A under both normoxic and hypoxia-mimicking conditions. The interaction with EMAP2 increases the proteasome-mediated HIF-1A degradation under the hypoxic conditions. Plays a role in hepatitis C virus internal ribosome entry site-mediated translation. Mediates nuclear translocation of the androgen receptor (AR) and thereby enhances androgen-mediated transactivation. Promotes MAVS degradation and thereby negatively regulates MAVS-mediated innate immune response.</text>
</comment>
<comment type="subunit">
    <text evidence="2">The 26S proteasome consists of a 20S proteasome core and two 19S regulatory subunits. The 20S proteasome core is a barrel-shaped complex made of 28 subunits that are arranged in four stacked rings. The two outer rings are each formed by seven alpha subunits, and the two inner rings are formed by seven beta subunits. The proteolytic activity is exerted by three beta-subunits PSMB5, PSMB6 and PSMB7. PSMA7 interacts directly with the PSMG1-PSMG2 heterodimer which promotes 20S proteasome assembly. Interacts with HIF1A. Interacts with RAB7A. Interacts with PRKN. Interacts with ABL1 and ABL2. Interacts with EMAP2. Interacts with MAVS.</text>
</comment>
<comment type="subcellular location">
    <subcellularLocation>
        <location evidence="2">Cytoplasm</location>
    </subcellularLocation>
    <subcellularLocation>
        <location evidence="2">Nucleus</location>
    </subcellularLocation>
    <text evidence="2">Translocated from the cytoplasm into the nucleus following interaction with AKIRIN2, which bridges the proteasome with the nuclear import receptor IPO9.</text>
</comment>
<comment type="alternative products">
    <event type="alternative splicing"/>
    <isoform>
        <id>P48004-1</id>
        <name>RC6-IL</name>
        <sequence type="displayed"/>
    </isoform>
    <isoform>
        <id>P48004-2</id>
        <name>RC6-IS</name>
        <sequence type="described" ref="VSP_005284"/>
    </isoform>
</comment>
<comment type="tissue specificity">
    <text>Ubiquitous.</text>
</comment>
<comment type="similarity">
    <text evidence="3">Belongs to the peptidase T1A family.</text>
</comment>
<proteinExistence type="evidence at protein level"/>
<feature type="chain" id="PRO_0000124144" description="Proteasome subunit alpha type-7">
    <location>
        <begin position="1"/>
        <end position="254"/>
    </location>
</feature>
<feature type="modified residue" description="Phosphotyrosine" evidence="2">
    <location>
        <position position="159"/>
    </location>
</feature>
<feature type="modified residue" description="N6-acetyllysine" evidence="2">
    <location>
        <position position="233"/>
    </location>
</feature>
<feature type="glycosylation site" description="O-linked (GlcNAc) serine" evidence="1">
    <location>
        <position position="136"/>
    </location>
</feature>
<feature type="splice variant" id="VSP_005284" description="In isoform RC6-IS." evidence="4">
    <location>
        <begin position="75"/>
        <end position="80"/>
    </location>
</feature>
<feature type="sequence conflict" description="In Ref. 1; AA sequence." evidence="5" ref="1">
    <original>C</original>
    <variation>V</variation>
    <location>
        <position position="70"/>
    </location>
</feature>
<feature type="sequence conflict" description="In Ref. 1; AA sequence." evidence="5" ref="1">
    <original>G</original>
    <variation>E</variation>
    <location>
        <position position="105"/>
    </location>
</feature>
<feature type="sequence conflict" description="In Ref. 1; AA sequence." evidence="5" ref="1">
    <original>T</original>
    <variation>V</variation>
    <location>
        <position position="114"/>
    </location>
</feature>
<feature type="sequence conflict" description="In Ref. 1; AA sequence." evidence="5" ref="1">
    <original>D</original>
    <variation>N</variation>
    <location>
        <position position="154"/>
    </location>
</feature>
<feature type="helix" evidence="6">
    <location>
        <begin position="17"/>
        <end position="26"/>
    </location>
</feature>
<feature type="strand" evidence="6">
    <location>
        <begin position="32"/>
        <end position="36"/>
    </location>
</feature>
<feature type="strand" evidence="6">
    <location>
        <begin position="38"/>
        <end position="46"/>
    </location>
</feature>
<feature type="turn" evidence="6">
    <location>
        <begin position="51"/>
        <end position="53"/>
    </location>
</feature>
<feature type="helix" evidence="6">
    <location>
        <begin position="56"/>
        <end position="58"/>
    </location>
</feature>
<feature type="strand" evidence="6">
    <location>
        <begin position="61"/>
        <end position="74"/>
    </location>
</feature>
<feature type="helix" evidence="6">
    <location>
        <begin position="83"/>
        <end position="104"/>
    </location>
</feature>
<feature type="helix" evidence="6">
    <location>
        <begin position="110"/>
        <end position="123"/>
    </location>
</feature>
<feature type="turn" evidence="6">
    <location>
        <begin position="124"/>
        <end position="126"/>
    </location>
</feature>
<feature type="strand" evidence="6">
    <location>
        <begin position="136"/>
        <end position="141"/>
    </location>
</feature>
<feature type="strand" evidence="6">
    <location>
        <begin position="149"/>
        <end position="153"/>
    </location>
</feature>
<feature type="strand" evidence="6">
    <location>
        <begin position="159"/>
        <end position="168"/>
    </location>
</feature>
<feature type="helix" evidence="6">
    <location>
        <begin position="171"/>
        <end position="181"/>
    </location>
</feature>
<feature type="turn" evidence="6">
    <location>
        <begin position="184"/>
        <end position="187"/>
    </location>
</feature>
<feature type="helix" evidence="6">
    <location>
        <begin position="190"/>
        <end position="202"/>
    </location>
</feature>
<feature type="strand" evidence="6">
    <location>
        <begin position="212"/>
        <end position="221"/>
    </location>
</feature>
<feature type="helix" evidence="6">
    <location>
        <begin position="228"/>
        <end position="238"/>
    </location>
</feature>